<sequence>MASLRYRRFLKLCEEWPVDETRVGRDLGAFIRQRVAQAFREGESTQVDDPDACDEMYASLNRMNTNYYREKYPRLQDTSFTEVTAEEYKMVLASDNLKQMEEMKKGMWKRLRDKFNVKPSEENS</sequence>
<dbReference type="EMBL" id="BC118877">
    <property type="protein sequence ID" value="AAI18878.1"/>
    <property type="molecule type" value="mRNA"/>
</dbReference>
<dbReference type="EMBL" id="BC155005">
    <property type="protein sequence ID" value="AAI55006.1"/>
    <property type="molecule type" value="mRNA"/>
</dbReference>
<dbReference type="RefSeq" id="NP_001072250.1">
    <property type="nucleotide sequence ID" value="NM_001078782.1"/>
</dbReference>
<dbReference type="RefSeq" id="XP_012818590.1">
    <property type="nucleotide sequence ID" value="XM_012963136.3"/>
</dbReference>
<dbReference type="FunCoup" id="Q0VFC7">
    <property type="interactions" value="839"/>
</dbReference>
<dbReference type="PaxDb" id="8364-ENSXETP00000027944"/>
<dbReference type="DNASU" id="779699"/>
<dbReference type="GeneID" id="779699"/>
<dbReference type="KEGG" id="xtr:779699"/>
<dbReference type="AGR" id="Xenbase:XB-GENE-5917457"/>
<dbReference type="CTD" id="84300"/>
<dbReference type="Xenbase" id="XB-GENE-5917457">
    <property type="gene designation" value="uqcc2"/>
</dbReference>
<dbReference type="eggNOG" id="ENOG502S2M4">
    <property type="taxonomic scope" value="Eukaryota"/>
</dbReference>
<dbReference type="HOGENOM" id="CLU_162766_0_0_1"/>
<dbReference type="InParanoid" id="Q0VFC7"/>
<dbReference type="OMA" id="CEEWPKD"/>
<dbReference type="OrthoDB" id="6266314at2759"/>
<dbReference type="PhylomeDB" id="Q0VFC7"/>
<dbReference type="Proteomes" id="UP000008143">
    <property type="component" value="Chromosome 5"/>
</dbReference>
<dbReference type="GO" id="GO:0005743">
    <property type="term" value="C:mitochondrial inner membrane"/>
    <property type="evidence" value="ECO:0000250"/>
    <property type="project" value="UniProtKB"/>
</dbReference>
<dbReference type="GO" id="GO:0005758">
    <property type="term" value="C:mitochondrial intermembrane space"/>
    <property type="evidence" value="ECO:0000250"/>
    <property type="project" value="UniProtKB"/>
</dbReference>
<dbReference type="GO" id="GO:0005759">
    <property type="term" value="C:mitochondrial matrix"/>
    <property type="evidence" value="ECO:0000250"/>
    <property type="project" value="UniProtKB"/>
</dbReference>
<dbReference type="GO" id="GO:0042645">
    <property type="term" value="C:mitochondrial nucleoid"/>
    <property type="evidence" value="ECO:0000250"/>
    <property type="project" value="UniProtKB"/>
</dbReference>
<dbReference type="GO" id="GO:0005739">
    <property type="term" value="C:mitochondrion"/>
    <property type="evidence" value="ECO:0000250"/>
    <property type="project" value="UniProtKB"/>
</dbReference>
<dbReference type="GO" id="GO:0034551">
    <property type="term" value="P:mitochondrial respiratory chain complex III assembly"/>
    <property type="evidence" value="ECO:0000250"/>
    <property type="project" value="UniProtKB"/>
</dbReference>
<dbReference type="GO" id="GO:0070131">
    <property type="term" value="P:positive regulation of mitochondrial translation"/>
    <property type="evidence" value="ECO:0000250"/>
    <property type="project" value="UniProtKB"/>
</dbReference>
<dbReference type="GO" id="GO:0050796">
    <property type="term" value="P:regulation of insulin secretion"/>
    <property type="evidence" value="ECO:0000250"/>
    <property type="project" value="UniProtKB"/>
</dbReference>
<dbReference type="GO" id="GO:0002082">
    <property type="term" value="P:regulation of oxidative phosphorylation"/>
    <property type="evidence" value="ECO:0000250"/>
    <property type="project" value="UniProtKB"/>
</dbReference>
<dbReference type="GO" id="GO:2001014">
    <property type="term" value="P:regulation of skeletal muscle cell differentiation"/>
    <property type="evidence" value="ECO:0000250"/>
    <property type="project" value="UniProtKB"/>
</dbReference>
<dbReference type="InterPro" id="IPR037698">
    <property type="entry name" value="UQCC2"/>
</dbReference>
<dbReference type="PANTHER" id="PTHR34260">
    <property type="entry name" value="UBIQUINOL-CYTOCHROME-C REDUCTASE COMPLEX ASSEMBLY FACTOR 2"/>
    <property type="match status" value="1"/>
</dbReference>
<dbReference type="PANTHER" id="PTHR34260:SF1">
    <property type="entry name" value="UBIQUINOL-CYTOCHROME-C REDUCTASE COMPLEX ASSEMBLY FACTOR 2"/>
    <property type="match status" value="1"/>
</dbReference>
<dbReference type="Pfam" id="PF20180">
    <property type="entry name" value="UQCC2_CBP6"/>
    <property type="match status" value="1"/>
</dbReference>
<proteinExistence type="evidence at transcript level"/>
<comment type="function">
    <text evidence="2 3">Required for the assembly of the ubiquinol-cytochrome c reductase complex (mitochondrial respiratory chain complex III or cytochrome b-c1 complex). May play a role in the modulation of respiratory chain activities such as oxygen consumption and ATP production. May be involved in cytochrome b translation and/or stability.</text>
</comment>
<comment type="subcellular location">
    <subcellularLocation>
        <location evidence="1">Mitochondrion matrix</location>
        <location evidence="1">Mitochondrion nucleoid</location>
    </subcellularLocation>
    <subcellularLocation>
        <location evidence="1">Mitochondrion</location>
    </subcellularLocation>
</comment>
<name>UQCC2_XENTR</name>
<gene>
    <name type="primary">uqcc2</name>
    <name type="synonym">mnf1</name>
</gene>
<reference key="1">
    <citation type="submission" date="2007-11" db="EMBL/GenBank/DDBJ databases">
        <authorList>
            <consortium name="NIH - Xenopus Gene Collection (XGC) project"/>
        </authorList>
    </citation>
    <scope>NUCLEOTIDE SEQUENCE [LARGE SCALE MRNA]</scope>
    <source>
        <strain>N6</strain>
        <tissue>Heart</tissue>
    </source>
</reference>
<protein>
    <recommendedName>
        <fullName>Ubiquinol-cytochrome-c reductase complex assembly factor 2</fullName>
    </recommendedName>
    <alternativeName>
        <fullName>Mitochondrial nucleoid factor 1</fullName>
    </alternativeName>
    <alternativeName>
        <fullName>Mitochondrial protein M19</fullName>
    </alternativeName>
</protein>
<evidence type="ECO:0000250" key="1"/>
<evidence type="ECO:0000250" key="2">
    <source>
        <dbReference type="UniProtKB" id="Q9BRT2"/>
    </source>
</evidence>
<evidence type="ECO:0000250" key="3">
    <source>
        <dbReference type="UniProtKB" id="Q9CQY6"/>
    </source>
</evidence>
<keyword id="KW-0496">Mitochondrion</keyword>
<keyword id="KW-1135">Mitochondrion nucleoid</keyword>
<keyword id="KW-1185">Reference proteome</keyword>
<keyword id="KW-0809">Transit peptide</keyword>
<accession>Q0VFC7</accession>
<feature type="transit peptide" description="Mitochondrion" evidence="1">
    <location>
        <begin position="1"/>
        <end position="13"/>
    </location>
</feature>
<feature type="chain" id="PRO_0000416464" description="Ubiquinol-cytochrome-c reductase complex assembly factor 2">
    <location>
        <begin position="14"/>
        <end position="124"/>
    </location>
</feature>
<organism>
    <name type="scientific">Xenopus tropicalis</name>
    <name type="common">Western clawed frog</name>
    <name type="synonym">Silurana tropicalis</name>
    <dbReference type="NCBI Taxonomy" id="8364"/>
    <lineage>
        <taxon>Eukaryota</taxon>
        <taxon>Metazoa</taxon>
        <taxon>Chordata</taxon>
        <taxon>Craniata</taxon>
        <taxon>Vertebrata</taxon>
        <taxon>Euteleostomi</taxon>
        <taxon>Amphibia</taxon>
        <taxon>Batrachia</taxon>
        <taxon>Anura</taxon>
        <taxon>Pipoidea</taxon>
        <taxon>Pipidae</taxon>
        <taxon>Xenopodinae</taxon>
        <taxon>Xenopus</taxon>
        <taxon>Silurana</taxon>
    </lineage>
</organism>